<gene>
    <name type="primary">yneE</name>
    <name type="ordered locus">b1520</name>
    <name type="ordered locus">JW5245</name>
</gene>
<proteinExistence type="inferred from homology"/>
<reference key="1">
    <citation type="journal article" date="1997" name="Science">
        <title>The complete genome sequence of Escherichia coli K-12.</title>
        <authorList>
            <person name="Blattner F.R."/>
            <person name="Plunkett G. III"/>
            <person name="Bloch C.A."/>
            <person name="Perna N.T."/>
            <person name="Burland V."/>
            <person name="Riley M."/>
            <person name="Collado-Vides J."/>
            <person name="Glasner J.D."/>
            <person name="Rode C.K."/>
            <person name="Mayhew G.F."/>
            <person name="Gregor J."/>
            <person name="Davis N.W."/>
            <person name="Kirkpatrick H.A."/>
            <person name="Goeden M.A."/>
            <person name="Rose D.J."/>
            <person name="Mau B."/>
            <person name="Shao Y."/>
        </authorList>
    </citation>
    <scope>NUCLEOTIDE SEQUENCE [LARGE SCALE GENOMIC DNA]</scope>
    <source>
        <strain>K12 / MG1655 / ATCC 47076</strain>
    </source>
</reference>
<reference key="2">
    <citation type="journal article" date="2006" name="Mol. Syst. Biol.">
        <title>Highly accurate genome sequences of Escherichia coli K-12 strains MG1655 and W3110.</title>
        <authorList>
            <person name="Hayashi K."/>
            <person name="Morooka N."/>
            <person name="Yamamoto Y."/>
            <person name="Fujita K."/>
            <person name="Isono K."/>
            <person name="Choi S."/>
            <person name="Ohtsubo E."/>
            <person name="Baba T."/>
            <person name="Wanner B.L."/>
            <person name="Mori H."/>
            <person name="Horiuchi T."/>
        </authorList>
    </citation>
    <scope>NUCLEOTIDE SEQUENCE [LARGE SCALE GENOMIC DNA]</scope>
    <source>
        <strain>K12 / W3110 / ATCC 27325 / DSM 5911</strain>
    </source>
</reference>
<organism>
    <name type="scientific">Escherichia coli (strain K12)</name>
    <dbReference type="NCBI Taxonomy" id="83333"/>
    <lineage>
        <taxon>Bacteria</taxon>
        <taxon>Pseudomonadati</taxon>
        <taxon>Pseudomonadota</taxon>
        <taxon>Gammaproteobacteria</taxon>
        <taxon>Enterobacterales</taxon>
        <taxon>Enterobacteriaceae</taxon>
        <taxon>Escherichia</taxon>
    </lineage>
</organism>
<name>YNEE_ECOLI</name>
<protein>
    <recommendedName>
        <fullName>Voltage-dependent anion channel-forming protein YneE</fullName>
    </recommendedName>
</protein>
<dbReference type="EMBL" id="U00096">
    <property type="protein sequence ID" value="AAC74593.2"/>
    <property type="molecule type" value="Genomic_DNA"/>
</dbReference>
<dbReference type="EMBL" id="AP009048">
    <property type="protein sequence ID" value="BAE76460.1"/>
    <property type="molecule type" value="Genomic_DNA"/>
</dbReference>
<dbReference type="PIR" id="C64906">
    <property type="entry name" value="C64906"/>
</dbReference>
<dbReference type="RefSeq" id="NP_416037.2">
    <property type="nucleotide sequence ID" value="NC_000913.3"/>
</dbReference>
<dbReference type="RefSeq" id="WP_001313828.1">
    <property type="nucleotide sequence ID" value="NZ_SSZK01000001.1"/>
</dbReference>
<dbReference type="SMR" id="P76146"/>
<dbReference type="BioGRID" id="4260229">
    <property type="interactions" value="13"/>
</dbReference>
<dbReference type="FunCoup" id="P76146">
    <property type="interactions" value="274"/>
</dbReference>
<dbReference type="STRING" id="511145.b1520"/>
<dbReference type="PaxDb" id="511145-b1520"/>
<dbReference type="EnsemblBacteria" id="AAC74593">
    <property type="protein sequence ID" value="AAC74593"/>
    <property type="gene ID" value="b1520"/>
</dbReference>
<dbReference type="GeneID" id="946188"/>
<dbReference type="KEGG" id="ecj:JW5245"/>
<dbReference type="KEGG" id="eco:b1520"/>
<dbReference type="KEGG" id="ecoc:C3026_08785"/>
<dbReference type="PATRIC" id="fig|1411691.4.peg.747"/>
<dbReference type="EchoBASE" id="EB3574"/>
<dbReference type="eggNOG" id="COG3781">
    <property type="taxonomic scope" value="Bacteria"/>
</dbReference>
<dbReference type="HOGENOM" id="CLU_029790_4_2_6"/>
<dbReference type="InParanoid" id="P76146"/>
<dbReference type="OMA" id="AYSVMIH"/>
<dbReference type="OrthoDB" id="445589at2"/>
<dbReference type="PhylomeDB" id="P76146"/>
<dbReference type="BioCyc" id="EcoCyc:G6807-MONOMER"/>
<dbReference type="PRO" id="PR:P76146"/>
<dbReference type="Proteomes" id="UP000000625">
    <property type="component" value="Chromosome"/>
</dbReference>
<dbReference type="GO" id="GO:0005886">
    <property type="term" value="C:plasma membrane"/>
    <property type="evidence" value="ECO:0000314"/>
    <property type="project" value="EcoCyc"/>
</dbReference>
<dbReference type="GO" id="GO:0005254">
    <property type="term" value="F:chloride channel activity"/>
    <property type="evidence" value="ECO:0007669"/>
    <property type="project" value="InterPro"/>
</dbReference>
<dbReference type="GO" id="GO:0071978">
    <property type="term" value="P:bacterial-type flagellum-dependent swarming motility"/>
    <property type="evidence" value="ECO:0000315"/>
    <property type="project" value="EcoCyc"/>
</dbReference>
<dbReference type="InterPro" id="IPR021134">
    <property type="entry name" value="Bestrophin-like"/>
</dbReference>
<dbReference type="InterPro" id="IPR044669">
    <property type="entry name" value="YneE/VCCN1/2-like"/>
</dbReference>
<dbReference type="PANTHER" id="PTHR33281">
    <property type="entry name" value="UPF0187 PROTEIN YNEE"/>
    <property type="match status" value="1"/>
</dbReference>
<dbReference type="PANTHER" id="PTHR33281:SF19">
    <property type="entry name" value="VOLTAGE-DEPENDENT ANION CHANNEL-FORMING PROTEIN YNEE"/>
    <property type="match status" value="1"/>
</dbReference>
<dbReference type="Pfam" id="PF01062">
    <property type="entry name" value="Bestrophin"/>
    <property type="match status" value="1"/>
</dbReference>
<sequence length="304" mass="34809">MIVRPQQHWLRRIFVWHGSVLSKISSRLLLNFLFSIAVIFMLPWYTHLGIKFTLAPFSILGVAIAIFLGFRNNAGYARYVEARKLWGQLMIASRSLLREVKTTLPDSASVREFARLQIAFAHCLRMTLRKQPQAEVLAHYLKTEDLQRVLASNSPANRILLIMGEWLAVQRRNGQLSDILFISLNDRLNDISAVLAGCERIAYTPIPFAYTLILHRTVYLFCIMLPFALVVDLHYMTPFISVLISYTFISLDCLAEELEDPFGTENNDLPLDAICNAIEIDLLQMNDEAEIPAKILPDRHYQLT</sequence>
<feature type="chain" id="PRO_0000217663" description="Voltage-dependent anion channel-forming protein YneE">
    <location>
        <begin position="1"/>
        <end position="304"/>
    </location>
</feature>
<feature type="transmembrane region" description="Helical" evidence="1">
    <location>
        <begin position="28"/>
        <end position="48"/>
    </location>
</feature>
<feature type="transmembrane region" description="Helical" evidence="1">
    <location>
        <begin position="50"/>
        <end position="70"/>
    </location>
</feature>
<feature type="transmembrane region" description="Helical" evidence="1">
    <location>
        <begin position="194"/>
        <end position="214"/>
    </location>
</feature>
<feature type="transmembrane region" description="Helical" evidence="1">
    <location>
        <begin position="220"/>
        <end position="240"/>
    </location>
</feature>
<accession>P76146</accession>
<accession>Q2MB96</accession>
<comment type="subcellular location">
    <subcellularLocation>
        <location evidence="1">Cell membrane</location>
        <topology evidence="1">Multi-pass membrane protein</topology>
    </subcellularLocation>
</comment>
<comment type="similarity">
    <text evidence="2">Belongs to the anion channel-forming bestrophin (TC 1.A.46) family.</text>
</comment>
<evidence type="ECO:0000255" key="1"/>
<evidence type="ECO:0000305" key="2"/>
<keyword id="KW-1003">Cell membrane</keyword>
<keyword id="KW-0406">Ion transport</keyword>
<keyword id="KW-0472">Membrane</keyword>
<keyword id="KW-1185">Reference proteome</keyword>
<keyword id="KW-0812">Transmembrane</keyword>
<keyword id="KW-1133">Transmembrane helix</keyword>
<keyword id="KW-0813">Transport</keyword>